<dbReference type="EMBL" id="CP001340">
    <property type="protein sequence ID" value="ACL94790.1"/>
    <property type="molecule type" value="Genomic_DNA"/>
</dbReference>
<dbReference type="RefSeq" id="WP_010919146.1">
    <property type="nucleotide sequence ID" value="NC_011916.1"/>
</dbReference>
<dbReference type="RefSeq" id="YP_002516698.1">
    <property type="nucleotide sequence ID" value="NC_011916.1"/>
</dbReference>
<dbReference type="SMR" id="B8H4F3"/>
<dbReference type="GeneID" id="7333057"/>
<dbReference type="KEGG" id="ccs:CCNA_01325"/>
<dbReference type="PATRIC" id="fig|565050.3.peg.1309"/>
<dbReference type="HOGENOM" id="CLU_055188_4_0_5"/>
<dbReference type="OrthoDB" id="9810293at2"/>
<dbReference type="PhylomeDB" id="B8H4F3"/>
<dbReference type="Proteomes" id="UP000001364">
    <property type="component" value="Chromosome"/>
</dbReference>
<dbReference type="GO" id="GO:0022625">
    <property type="term" value="C:cytosolic large ribosomal subunit"/>
    <property type="evidence" value="ECO:0007669"/>
    <property type="project" value="TreeGrafter"/>
</dbReference>
<dbReference type="GO" id="GO:0019843">
    <property type="term" value="F:rRNA binding"/>
    <property type="evidence" value="ECO:0007669"/>
    <property type="project" value="UniProtKB-UniRule"/>
</dbReference>
<dbReference type="GO" id="GO:0003735">
    <property type="term" value="F:structural constituent of ribosome"/>
    <property type="evidence" value="ECO:0007669"/>
    <property type="project" value="InterPro"/>
</dbReference>
<dbReference type="GO" id="GO:0006412">
    <property type="term" value="P:translation"/>
    <property type="evidence" value="ECO:0007669"/>
    <property type="project" value="UniProtKB-UniRule"/>
</dbReference>
<dbReference type="Gene3D" id="3.100.10.10">
    <property type="match status" value="1"/>
</dbReference>
<dbReference type="HAMAP" id="MF_01341">
    <property type="entry name" value="Ribosomal_uL15"/>
    <property type="match status" value="1"/>
</dbReference>
<dbReference type="InterPro" id="IPR030878">
    <property type="entry name" value="Ribosomal_uL15"/>
</dbReference>
<dbReference type="InterPro" id="IPR021131">
    <property type="entry name" value="Ribosomal_uL15/eL18"/>
</dbReference>
<dbReference type="InterPro" id="IPR036227">
    <property type="entry name" value="Ribosomal_uL15/eL18_sf"/>
</dbReference>
<dbReference type="InterPro" id="IPR005749">
    <property type="entry name" value="Ribosomal_uL15_bac-type"/>
</dbReference>
<dbReference type="InterPro" id="IPR001196">
    <property type="entry name" value="Ribosomal_uL15_CS"/>
</dbReference>
<dbReference type="NCBIfam" id="TIGR01071">
    <property type="entry name" value="rplO_bact"/>
    <property type="match status" value="1"/>
</dbReference>
<dbReference type="PANTHER" id="PTHR12934">
    <property type="entry name" value="50S RIBOSOMAL PROTEIN L15"/>
    <property type="match status" value="1"/>
</dbReference>
<dbReference type="PANTHER" id="PTHR12934:SF11">
    <property type="entry name" value="LARGE RIBOSOMAL SUBUNIT PROTEIN UL15M"/>
    <property type="match status" value="1"/>
</dbReference>
<dbReference type="Pfam" id="PF00828">
    <property type="entry name" value="Ribosomal_L27A"/>
    <property type="match status" value="1"/>
</dbReference>
<dbReference type="SUPFAM" id="SSF52080">
    <property type="entry name" value="Ribosomal proteins L15p and L18e"/>
    <property type="match status" value="1"/>
</dbReference>
<dbReference type="PROSITE" id="PS00475">
    <property type="entry name" value="RIBOSOMAL_L15"/>
    <property type="match status" value="1"/>
</dbReference>
<sequence length="161" mass="16925">MTKLNELAPREGSTKGRMRVGRGPGSGKGKTAGRGVKGQKARSGVAINGFEGGQMPLHMRMPKRGFNNPFRLEFAEVNLWRLEQAVEAGKIKKGAELDAAALIAAGVIRRELDGVKLLAKGEIKTALKLTVYSATEAAIKAVEAAGGSVTVTKKAKAQAEA</sequence>
<name>RL15_CAUVN</name>
<organism>
    <name type="scientific">Caulobacter vibrioides (strain NA1000 / CB15N)</name>
    <name type="common">Caulobacter crescentus</name>
    <dbReference type="NCBI Taxonomy" id="565050"/>
    <lineage>
        <taxon>Bacteria</taxon>
        <taxon>Pseudomonadati</taxon>
        <taxon>Pseudomonadota</taxon>
        <taxon>Alphaproteobacteria</taxon>
        <taxon>Caulobacterales</taxon>
        <taxon>Caulobacteraceae</taxon>
        <taxon>Caulobacter</taxon>
    </lineage>
</organism>
<accession>B8H4F3</accession>
<gene>
    <name evidence="1" type="primary">rplO</name>
    <name type="ordered locus">CCNA_01325</name>
</gene>
<proteinExistence type="inferred from homology"/>
<keyword id="KW-1185">Reference proteome</keyword>
<keyword id="KW-0687">Ribonucleoprotein</keyword>
<keyword id="KW-0689">Ribosomal protein</keyword>
<keyword id="KW-0694">RNA-binding</keyword>
<keyword id="KW-0699">rRNA-binding</keyword>
<protein>
    <recommendedName>
        <fullName evidence="1">Large ribosomal subunit protein uL15</fullName>
    </recommendedName>
    <alternativeName>
        <fullName evidence="3">50S ribosomal protein L15</fullName>
    </alternativeName>
</protein>
<feature type="chain" id="PRO_1000166281" description="Large ribosomal subunit protein uL15">
    <location>
        <begin position="1"/>
        <end position="161"/>
    </location>
</feature>
<feature type="region of interest" description="Disordered" evidence="2">
    <location>
        <begin position="1"/>
        <end position="39"/>
    </location>
</feature>
<feature type="compositionally biased region" description="Gly residues" evidence="2">
    <location>
        <begin position="22"/>
        <end position="36"/>
    </location>
</feature>
<comment type="function">
    <text evidence="1">Binds to the 23S rRNA.</text>
</comment>
<comment type="subunit">
    <text evidence="1">Part of the 50S ribosomal subunit.</text>
</comment>
<comment type="similarity">
    <text evidence="1">Belongs to the universal ribosomal protein uL15 family.</text>
</comment>
<evidence type="ECO:0000255" key="1">
    <source>
        <dbReference type="HAMAP-Rule" id="MF_01341"/>
    </source>
</evidence>
<evidence type="ECO:0000256" key="2">
    <source>
        <dbReference type="SAM" id="MobiDB-lite"/>
    </source>
</evidence>
<evidence type="ECO:0000305" key="3"/>
<reference key="1">
    <citation type="journal article" date="2010" name="J. Bacteriol.">
        <title>The genetic basis of laboratory adaptation in Caulobacter crescentus.</title>
        <authorList>
            <person name="Marks M.E."/>
            <person name="Castro-Rojas C.M."/>
            <person name="Teiling C."/>
            <person name="Du L."/>
            <person name="Kapatral V."/>
            <person name="Walunas T.L."/>
            <person name="Crosson S."/>
        </authorList>
    </citation>
    <scope>NUCLEOTIDE SEQUENCE [LARGE SCALE GENOMIC DNA]</scope>
    <source>
        <strain>NA1000 / CB15N</strain>
    </source>
</reference>